<name>GLGX_YERPN</name>
<sequence>MAVLTHGSPTPSGAHFDGKGINFTLFSAHAEQVTLCLFDEQGQERQIAMPARTGDIWHGYLPGGKPGQRYGYRVSGPFEPSRGHRFNPHKLLIDPRTRALEGKVGDDPRFTGGVSQPDVRDSAAALPKCLVIHEEYDWQGDKPPAIPWGNTVIYEAHVRGLTQLHPDIPPELRGTYAALAHPALIEHLKTLGITTLELLPVQFHIDEPRLQKMGLSNYWGYNVLAPFAVDPDYASGREGISPLRELRDAVKALHNAGIEVILDVVFNHSAELDVFGPTLCQRGIDNASYYWLTPDGEYDNITGCGNALRLSHPYVTQWVIDCLNYWRDSCHVDGFRFDLGTVLGRTPAFDQHAPLFAALAADERLSACKLIAEPWDIGLGGYQLGNFPTGFSEWNDQYRDAMRGFWLRGEVPRGTFAQHFAASSRLFEQRGRLPSASINQITAHDGFTLLDLLCFNQKHNQMNGEENRDGSDNNHSNNFGCEGLVADAAIWQRRKACQRALLTTLLLSQGTPMLLAGDEQGHSQQGNNNAYCQNNILTWLDWGSADRALMTFTADLIRLRQQIPALTQDQWWQSGDSNVQWLDSQGQALSDAAWEQGCQQQLQILLSQRWLVLINATDHECEMHLPEGEWEGIPPFGVSDHAERLTTWRGSAHTICVLIKRD</sequence>
<dbReference type="EC" id="3.2.1.196" evidence="1"/>
<dbReference type="EMBL" id="CP000305">
    <property type="protein sequence ID" value="ABG19916.1"/>
    <property type="molecule type" value="Genomic_DNA"/>
</dbReference>
<dbReference type="EMBL" id="ACNQ01000019">
    <property type="protein sequence ID" value="EEO74481.1"/>
    <property type="molecule type" value="Genomic_DNA"/>
</dbReference>
<dbReference type="RefSeq" id="WP_002209499.1">
    <property type="nucleotide sequence ID" value="NZ_ACNQ01000019.1"/>
</dbReference>
<dbReference type="SMR" id="Q1CDL4"/>
<dbReference type="CAZy" id="CBM48">
    <property type="family name" value="Carbohydrate-Binding Module Family 48"/>
</dbReference>
<dbReference type="CAZy" id="GH13">
    <property type="family name" value="Glycoside Hydrolase Family 13"/>
</dbReference>
<dbReference type="GeneID" id="57974763"/>
<dbReference type="KEGG" id="ypn:YPN_3589"/>
<dbReference type="HOGENOM" id="CLU_011725_1_1_6"/>
<dbReference type="UniPathway" id="UPA00165"/>
<dbReference type="Proteomes" id="UP000008936">
    <property type="component" value="Chromosome"/>
</dbReference>
<dbReference type="GO" id="GO:0004133">
    <property type="term" value="F:glycogen debranching enzyme activity"/>
    <property type="evidence" value="ECO:0007669"/>
    <property type="project" value="UniProtKB-UniRule"/>
</dbReference>
<dbReference type="GO" id="GO:0004553">
    <property type="term" value="F:hydrolase activity, hydrolyzing O-glycosyl compounds"/>
    <property type="evidence" value="ECO:0007669"/>
    <property type="project" value="InterPro"/>
</dbReference>
<dbReference type="GO" id="GO:0005980">
    <property type="term" value="P:glycogen catabolic process"/>
    <property type="evidence" value="ECO:0007669"/>
    <property type="project" value="UniProtKB-UniRule"/>
</dbReference>
<dbReference type="CDD" id="cd11326">
    <property type="entry name" value="AmyAc_Glg_debranch"/>
    <property type="match status" value="1"/>
</dbReference>
<dbReference type="CDD" id="cd02856">
    <property type="entry name" value="E_set_GDE_Isoamylase_N"/>
    <property type="match status" value="1"/>
</dbReference>
<dbReference type="Gene3D" id="3.20.20.80">
    <property type="entry name" value="Glycosidases"/>
    <property type="match status" value="1"/>
</dbReference>
<dbReference type="Gene3D" id="2.60.40.1180">
    <property type="entry name" value="Golgi alpha-mannosidase II"/>
    <property type="match status" value="1"/>
</dbReference>
<dbReference type="Gene3D" id="2.60.40.10">
    <property type="entry name" value="Immunoglobulins"/>
    <property type="match status" value="1"/>
</dbReference>
<dbReference type="HAMAP" id="MF_01248">
    <property type="entry name" value="GlgX"/>
    <property type="match status" value="1"/>
</dbReference>
<dbReference type="InterPro" id="IPR040784">
    <property type="entry name" value="GlgX_C"/>
</dbReference>
<dbReference type="InterPro" id="IPR044505">
    <property type="entry name" value="GlgX_Isoamylase_N_E_set"/>
</dbReference>
<dbReference type="InterPro" id="IPR006047">
    <property type="entry name" value="Glyco_hydro_13_cat_dom"/>
</dbReference>
<dbReference type="InterPro" id="IPR004193">
    <property type="entry name" value="Glyco_hydro_13_N"/>
</dbReference>
<dbReference type="InterPro" id="IPR013780">
    <property type="entry name" value="Glyco_hydro_b"/>
</dbReference>
<dbReference type="InterPro" id="IPR022844">
    <property type="entry name" value="Glycogen_debranch_bac"/>
</dbReference>
<dbReference type="InterPro" id="IPR011837">
    <property type="entry name" value="Glycogen_debranch_GlgX"/>
</dbReference>
<dbReference type="InterPro" id="IPR017853">
    <property type="entry name" value="Glycoside_hydrolase_SF"/>
</dbReference>
<dbReference type="InterPro" id="IPR013783">
    <property type="entry name" value="Ig-like_fold"/>
</dbReference>
<dbReference type="InterPro" id="IPR014756">
    <property type="entry name" value="Ig_E-set"/>
</dbReference>
<dbReference type="NCBIfam" id="TIGR02100">
    <property type="entry name" value="glgX_debranch"/>
    <property type="match status" value="1"/>
</dbReference>
<dbReference type="NCBIfam" id="NF002983">
    <property type="entry name" value="PRK03705.1"/>
    <property type="match status" value="1"/>
</dbReference>
<dbReference type="PANTHER" id="PTHR43002">
    <property type="entry name" value="GLYCOGEN DEBRANCHING ENZYME"/>
    <property type="match status" value="1"/>
</dbReference>
<dbReference type="Pfam" id="PF02922">
    <property type="entry name" value="CBM_48"/>
    <property type="match status" value="1"/>
</dbReference>
<dbReference type="Pfam" id="PF18390">
    <property type="entry name" value="GlgX_C"/>
    <property type="match status" value="1"/>
</dbReference>
<dbReference type="SMART" id="SM00642">
    <property type="entry name" value="Aamy"/>
    <property type="match status" value="1"/>
</dbReference>
<dbReference type="SUPFAM" id="SSF51445">
    <property type="entry name" value="(Trans)glycosidases"/>
    <property type="match status" value="1"/>
</dbReference>
<dbReference type="SUPFAM" id="SSF81296">
    <property type="entry name" value="E set domains"/>
    <property type="match status" value="1"/>
</dbReference>
<dbReference type="SUPFAM" id="SSF51011">
    <property type="entry name" value="Glycosyl hydrolase domain"/>
    <property type="match status" value="1"/>
</dbReference>
<feature type="chain" id="PRO_1000067112" description="Glycogen debranching enzyme">
    <location>
        <begin position="1"/>
        <end position="662"/>
    </location>
</feature>
<feature type="active site" description="Nucleophile" evidence="1">
    <location>
        <position position="338"/>
    </location>
</feature>
<feature type="active site" description="Proton donor" evidence="1">
    <location>
        <position position="373"/>
    </location>
</feature>
<feature type="site" description="Transition state stabilizer" evidence="1">
    <location>
        <position position="445"/>
    </location>
</feature>
<gene>
    <name evidence="1" type="primary">glgX</name>
    <name type="ordered locus">YPN_3589</name>
    <name type="ORF">YP516_4078</name>
</gene>
<keyword id="KW-0119">Carbohydrate metabolism</keyword>
<keyword id="KW-0321">Glycogen metabolism</keyword>
<keyword id="KW-0326">Glycosidase</keyword>
<keyword id="KW-0378">Hydrolase</keyword>
<reference key="1">
    <citation type="journal article" date="2006" name="J. Bacteriol.">
        <title>Complete genome sequence of Yersinia pestis strains Antiqua and Nepal516: evidence of gene reduction in an emerging pathogen.</title>
        <authorList>
            <person name="Chain P.S.G."/>
            <person name="Hu P."/>
            <person name="Malfatti S.A."/>
            <person name="Radnedge L."/>
            <person name="Larimer F."/>
            <person name="Vergez L.M."/>
            <person name="Worsham P."/>
            <person name="Chu M.C."/>
            <person name="Andersen G.L."/>
        </authorList>
    </citation>
    <scope>NUCLEOTIDE SEQUENCE [LARGE SCALE GENOMIC DNA]</scope>
    <source>
        <strain>Nepal516</strain>
    </source>
</reference>
<reference key="2">
    <citation type="submission" date="2009-04" db="EMBL/GenBank/DDBJ databases">
        <title>Yersinia pestis Nepal516A whole genome shotgun sequencing project.</title>
        <authorList>
            <person name="Plunkett G. III"/>
            <person name="Anderson B.D."/>
            <person name="Baumler D.J."/>
            <person name="Burland V."/>
            <person name="Cabot E.L."/>
            <person name="Glasner J.D."/>
            <person name="Mau B."/>
            <person name="Neeno-Eckwall E."/>
            <person name="Perna N.T."/>
            <person name="Munk A.C."/>
            <person name="Tapia R."/>
            <person name="Green L.D."/>
            <person name="Rogers Y.C."/>
            <person name="Detter J.C."/>
            <person name="Bruce D.C."/>
            <person name="Brettin T.S."/>
        </authorList>
    </citation>
    <scope>NUCLEOTIDE SEQUENCE [LARGE SCALE GENOMIC DNA]</scope>
    <source>
        <strain>Nepal516</strain>
    </source>
</reference>
<organism>
    <name type="scientific">Yersinia pestis bv. Antiqua (strain Nepal516)</name>
    <dbReference type="NCBI Taxonomy" id="377628"/>
    <lineage>
        <taxon>Bacteria</taxon>
        <taxon>Pseudomonadati</taxon>
        <taxon>Pseudomonadota</taxon>
        <taxon>Gammaproteobacteria</taxon>
        <taxon>Enterobacterales</taxon>
        <taxon>Yersiniaceae</taxon>
        <taxon>Yersinia</taxon>
    </lineage>
</organism>
<evidence type="ECO:0000255" key="1">
    <source>
        <dbReference type="HAMAP-Rule" id="MF_01248"/>
    </source>
</evidence>
<accession>Q1CDL4</accession>
<accession>D1Q1S8</accession>
<proteinExistence type="inferred from homology"/>
<protein>
    <recommendedName>
        <fullName evidence="1">Glycogen debranching enzyme</fullName>
        <ecNumber evidence="1">3.2.1.196</ecNumber>
    </recommendedName>
    <alternativeName>
        <fullName evidence="1">Limit dextrin alpha-1,6-maltotetraose-hydrolase</fullName>
    </alternativeName>
</protein>
<comment type="function">
    <text evidence="1">Removes maltotriose and maltotetraose chains that are attached by 1,6-alpha-linkage to the limit dextrin main chain, generating a debranched limit dextrin.</text>
</comment>
<comment type="catalytic activity">
    <reaction evidence="1">
        <text>Hydrolysis of (1-&gt;6)-alpha-D-glucosidic linkages to branches with degrees of polymerization of three or four glucose residues in limit dextrin.</text>
        <dbReference type="EC" id="3.2.1.196"/>
    </reaction>
</comment>
<comment type="pathway">
    <text evidence="1">Glycan degradation; glycogen degradation.</text>
</comment>
<comment type="similarity">
    <text evidence="1">Belongs to the glycosyl hydrolase 13 family.</text>
</comment>